<name>GLND_BURP1</name>
<sequence>MSASVAEPPPALSRKAEFKAAKAELLARFKSANHVTPLMHALSRATDDALRSLWQECGLPATLALVAVGGFGRGELSPHSDVDILVLLPDAHASELDERIERFIGMAWDLGLEIGSSVRTVDQCIEEASHDVTVQTSLLEARRIVGSTALFERFMLRYREALDARAFFQAKVLEMRQRHAKFQDTPYSLEPNVKESPGGLRDLQTILWIARAAGFGSSWRELDTRGLITDREARELRRNEGFLKTLRARLHVIAGRRQDILVFDLQTQAAESFGYQPTSAKRASEQLMRRYYWAAKAVTQLATILIQNIEAQLFPATSGVTRVLSPGRFVEKQGMLEIAADDVFERHPDAILEAFLLYEATRGVKGLSARTLRALYNSRDVMNNAWRRDPRNRHTFMQILQQPEGITHAFRLMNQTSVLGRYLLNFRRIVGQMQHDLYHVYTVDQHILMVLRNIRRFAVAEHAHEYPFCSQLIVNFERPWVLYVAALFHDIAKGRGGDHSALGMADARRFCREHGIEGDDAALVVWLVQHHLTMSQVAQKQDTSDPVVIKRFAELVGSERRLTALYLLTVADIRGTSPKVWNTWKGKLLEDLYRATLAVLGGAQPDAHSELKTRQEEALALLRLETVPPDAHRALWDQLDVGYFLRHDAADIAWQTRVLYRHVAADTAIVRARPSPVGDALQVLVYVKDRSDLFAGICAYFDRNGLSVLDARVNTTRHGYALDNFIVTQTEHDVQYRDIANLVEQQLAARLAESAPLPEPSKGRLSRLSRTFPITPRVDLRADERGQYYILSVSANDRPGLLYSIARVLAEHRVGVHAARINTLGERVEDVFMLDGTGLSDNRLQIQVETELLRAIAV</sequence>
<dbReference type="EC" id="2.7.7.59" evidence="1"/>
<dbReference type="EC" id="3.1.4.-" evidence="1"/>
<dbReference type="EMBL" id="CP000124">
    <property type="protein sequence ID" value="ABA50066.1"/>
    <property type="molecule type" value="Genomic_DNA"/>
</dbReference>
<dbReference type="RefSeq" id="WP_004193976.1">
    <property type="nucleotide sequence ID" value="NC_007434.1"/>
</dbReference>
<dbReference type="SMR" id="Q3JR26"/>
<dbReference type="EnsemblBacteria" id="ABA50066">
    <property type="protein sequence ID" value="ABA50066"/>
    <property type="gene ID" value="BURPS1710b_2585"/>
</dbReference>
<dbReference type="KEGG" id="bpm:BURPS1710b_2585"/>
<dbReference type="HOGENOM" id="CLU_012833_0_0_4"/>
<dbReference type="Proteomes" id="UP000002700">
    <property type="component" value="Chromosome I"/>
</dbReference>
<dbReference type="GO" id="GO:0008773">
    <property type="term" value="F:[protein-PII] uridylyltransferase activity"/>
    <property type="evidence" value="ECO:0007669"/>
    <property type="project" value="UniProtKB-UniRule"/>
</dbReference>
<dbReference type="GO" id="GO:0008081">
    <property type="term" value="F:phosphoric diester hydrolase activity"/>
    <property type="evidence" value="ECO:0007669"/>
    <property type="project" value="UniProtKB-UniRule"/>
</dbReference>
<dbReference type="GO" id="GO:0006808">
    <property type="term" value="P:regulation of nitrogen utilization"/>
    <property type="evidence" value="ECO:0007669"/>
    <property type="project" value="UniProtKB-UniRule"/>
</dbReference>
<dbReference type="CDD" id="cd04899">
    <property type="entry name" value="ACT_ACR-UUR-like_2"/>
    <property type="match status" value="1"/>
</dbReference>
<dbReference type="CDD" id="cd04900">
    <property type="entry name" value="ACT_UUR-like_1"/>
    <property type="match status" value="1"/>
</dbReference>
<dbReference type="CDD" id="cd00077">
    <property type="entry name" value="HDc"/>
    <property type="match status" value="1"/>
</dbReference>
<dbReference type="CDD" id="cd05401">
    <property type="entry name" value="NT_GlnE_GlnD_like"/>
    <property type="match status" value="1"/>
</dbReference>
<dbReference type="Gene3D" id="3.30.70.260">
    <property type="match status" value="1"/>
</dbReference>
<dbReference type="Gene3D" id="3.30.460.10">
    <property type="entry name" value="Beta Polymerase, domain 2"/>
    <property type="match status" value="1"/>
</dbReference>
<dbReference type="Gene3D" id="1.10.3210.10">
    <property type="entry name" value="Hypothetical protein af1432"/>
    <property type="match status" value="1"/>
</dbReference>
<dbReference type="Gene3D" id="1.20.120.330">
    <property type="entry name" value="Nucleotidyltransferases domain 2"/>
    <property type="match status" value="1"/>
</dbReference>
<dbReference type="HAMAP" id="MF_00277">
    <property type="entry name" value="PII_uridylyl_transf"/>
    <property type="match status" value="1"/>
</dbReference>
<dbReference type="InterPro" id="IPR045865">
    <property type="entry name" value="ACT-like_dom_sf"/>
</dbReference>
<dbReference type="InterPro" id="IPR002912">
    <property type="entry name" value="ACT_dom"/>
</dbReference>
<dbReference type="InterPro" id="IPR003607">
    <property type="entry name" value="HD/PDEase_dom"/>
</dbReference>
<dbReference type="InterPro" id="IPR006674">
    <property type="entry name" value="HD_domain"/>
</dbReference>
<dbReference type="InterPro" id="IPR043519">
    <property type="entry name" value="NT_sf"/>
</dbReference>
<dbReference type="InterPro" id="IPR013546">
    <property type="entry name" value="PII_UdlTrfase/GS_AdlTrfase"/>
</dbReference>
<dbReference type="InterPro" id="IPR002934">
    <property type="entry name" value="Polymerase_NTP_transf_dom"/>
</dbReference>
<dbReference type="InterPro" id="IPR010043">
    <property type="entry name" value="UTase/UR"/>
</dbReference>
<dbReference type="NCBIfam" id="NF002837">
    <property type="entry name" value="PRK03059.1"/>
    <property type="match status" value="1"/>
</dbReference>
<dbReference type="NCBIfam" id="TIGR01693">
    <property type="entry name" value="UTase_glnD"/>
    <property type="match status" value="1"/>
</dbReference>
<dbReference type="PANTHER" id="PTHR47320">
    <property type="entry name" value="BIFUNCTIONAL URIDYLYLTRANSFERASE/URIDYLYL-REMOVING ENZYME"/>
    <property type="match status" value="1"/>
</dbReference>
<dbReference type="PANTHER" id="PTHR47320:SF1">
    <property type="entry name" value="BIFUNCTIONAL URIDYLYLTRANSFERASE_URIDYLYL-REMOVING ENZYME"/>
    <property type="match status" value="1"/>
</dbReference>
<dbReference type="Pfam" id="PF08335">
    <property type="entry name" value="GlnD_UR_UTase"/>
    <property type="match status" value="1"/>
</dbReference>
<dbReference type="Pfam" id="PF01966">
    <property type="entry name" value="HD"/>
    <property type="match status" value="1"/>
</dbReference>
<dbReference type="Pfam" id="PF01909">
    <property type="entry name" value="NTP_transf_2"/>
    <property type="match status" value="1"/>
</dbReference>
<dbReference type="PIRSF" id="PIRSF006288">
    <property type="entry name" value="PII_uridyltransf"/>
    <property type="match status" value="1"/>
</dbReference>
<dbReference type="SMART" id="SM00471">
    <property type="entry name" value="HDc"/>
    <property type="match status" value="1"/>
</dbReference>
<dbReference type="SUPFAM" id="SSF55021">
    <property type="entry name" value="ACT-like"/>
    <property type="match status" value="2"/>
</dbReference>
<dbReference type="SUPFAM" id="SSF109604">
    <property type="entry name" value="HD-domain/PDEase-like"/>
    <property type="match status" value="1"/>
</dbReference>
<dbReference type="SUPFAM" id="SSF81301">
    <property type="entry name" value="Nucleotidyltransferase"/>
    <property type="match status" value="1"/>
</dbReference>
<dbReference type="SUPFAM" id="SSF81593">
    <property type="entry name" value="Nucleotidyltransferase substrate binding subunit/domain"/>
    <property type="match status" value="1"/>
</dbReference>
<dbReference type="PROSITE" id="PS51671">
    <property type="entry name" value="ACT"/>
    <property type="match status" value="2"/>
</dbReference>
<dbReference type="PROSITE" id="PS51831">
    <property type="entry name" value="HD"/>
    <property type="match status" value="1"/>
</dbReference>
<reference key="1">
    <citation type="journal article" date="2010" name="Genome Biol. Evol.">
        <title>Continuing evolution of Burkholderia mallei through genome reduction and large-scale rearrangements.</title>
        <authorList>
            <person name="Losada L."/>
            <person name="Ronning C.M."/>
            <person name="DeShazer D."/>
            <person name="Woods D."/>
            <person name="Fedorova N."/>
            <person name="Kim H.S."/>
            <person name="Shabalina S.A."/>
            <person name="Pearson T.R."/>
            <person name="Brinkac L."/>
            <person name="Tan P."/>
            <person name="Nandi T."/>
            <person name="Crabtree J."/>
            <person name="Badger J."/>
            <person name="Beckstrom-Sternberg S."/>
            <person name="Saqib M."/>
            <person name="Schutzer S.E."/>
            <person name="Keim P."/>
            <person name="Nierman W.C."/>
        </authorList>
    </citation>
    <scope>NUCLEOTIDE SEQUENCE [LARGE SCALE GENOMIC DNA]</scope>
    <source>
        <strain>1710b</strain>
    </source>
</reference>
<evidence type="ECO:0000255" key="1">
    <source>
        <dbReference type="HAMAP-Rule" id="MF_00277"/>
    </source>
</evidence>
<evidence type="ECO:0000255" key="2">
    <source>
        <dbReference type="PROSITE-ProRule" id="PRU01175"/>
    </source>
</evidence>
<protein>
    <recommendedName>
        <fullName evidence="1">Bifunctional uridylyltransferase/uridylyl-removing enzyme</fullName>
        <shortName evidence="1">UTase/UR</shortName>
    </recommendedName>
    <alternativeName>
        <fullName evidence="1">Bifunctional [protein-PII] modification enzyme</fullName>
    </alternativeName>
    <alternativeName>
        <fullName evidence="1">Bifunctional nitrogen sensor protein</fullName>
    </alternativeName>
    <domain>
        <recommendedName>
            <fullName evidence="1">[Protein-PII] uridylyltransferase</fullName>
            <shortName evidence="1">PII uridylyltransferase</shortName>
            <shortName evidence="1">UTase</shortName>
            <ecNumber evidence="1">2.7.7.59</ecNumber>
        </recommendedName>
    </domain>
    <domain>
        <recommendedName>
            <fullName evidence="1">[Protein-PII]-UMP uridylyl-removing enzyme</fullName>
            <shortName evidence="1">UR</shortName>
            <ecNumber evidence="1">3.1.4.-</ecNumber>
        </recommendedName>
    </domain>
</protein>
<proteinExistence type="inferred from homology"/>
<accession>Q3JR26</accession>
<feature type="chain" id="PRO_0000231679" description="Bifunctional uridylyltransferase/uridylyl-removing enzyme">
    <location>
        <begin position="1"/>
        <end position="858"/>
    </location>
</feature>
<feature type="domain" description="HD" evidence="2">
    <location>
        <begin position="443"/>
        <end position="565"/>
    </location>
</feature>
<feature type="domain" description="ACT 1" evidence="1">
    <location>
        <begin position="682"/>
        <end position="761"/>
    </location>
</feature>
<feature type="domain" description="ACT 2" evidence="1">
    <location>
        <begin position="790"/>
        <end position="858"/>
    </location>
</feature>
<feature type="region of interest" description="Uridylyltransferase">
    <location>
        <begin position="1"/>
        <end position="324"/>
    </location>
</feature>
<feature type="region of interest" description="Uridylyl-removing">
    <location>
        <begin position="325"/>
        <end position="681"/>
    </location>
</feature>
<keyword id="KW-0378">Hydrolase</keyword>
<keyword id="KW-0460">Magnesium</keyword>
<keyword id="KW-0511">Multifunctional enzyme</keyword>
<keyword id="KW-0548">Nucleotidyltransferase</keyword>
<keyword id="KW-0677">Repeat</keyword>
<keyword id="KW-0808">Transferase</keyword>
<comment type="function">
    <text evidence="1">Modifies, by uridylylation and deuridylylation, the PII regulatory proteins (GlnB and homologs), in response to the nitrogen status of the cell that GlnD senses through the glutamine level. Under low glutamine levels, catalyzes the conversion of the PII proteins and UTP to PII-UMP and PPi, while under higher glutamine levels, GlnD hydrolyzes PII-UMP to PII and UMP (deuridylylation). Thus, controls uridylylation state and activity of the PII proteins, and plays an important role in the regulation of nitrogen assimilation and metabolism.</text>
</comment>
<comment type="catalytic activity">
    <reaction evidence="1">
        <text>[protein-PII]-L-tyrosine + UTP = [protein-PII]-uridylyl-L-tyrosine + diphosphate</text>
        <dbReference type="Rhea" id="RHEA:13673"/>
        <dbReference type="Rhea" id="RHEA-COMP:12147"/>
        <dbReference type="Rhea" id="RHEA-COMP:12148"/>
        <dbReference type="ChEBI" id="CHEBI:33019"/>
        <dbReference type="ChEBI" id="CHEBI:46398"/>
        <dbReference type="ChEBI" id="CHEBI:46858"/>
        <dbReference type="ChEBI" id="CHEBI:90602"/>
        <dbReference type="EC" id="2.7.7.59"/>
    </reaction>
</comment>
<comment type="catalytic activity">
    <reaction evidence="1">
        <text>[protein-PII]-uridylyl-L-tyrosine + H2O = [protein-PII]-L-tyrosine + UMP + H(+)</text>
        <dbReference type="Rhea" id="RHEA:48600"/>
        <dbReference type="Rhea" id="RHEA-COMP:12147"/>
        <dbReference type="Rhea" id="RHEA-COMP:12148"/>
        <dbReference type="ChEBI" id="CHEBI:15377"/>
        <dbReference type="ChEBI" id="CHEBI:15378"/>
        <dbReference type="ChEBI" id="CHEBI:46858"/>
        <dbReference type="ChEBI" id="CHEBI:57865"/>
        <dbReference type="ChEBI" id="CHEBI:90602"/>
    </reaction>
</comment>
<comment type="cofactor">
    <cofactor evidence="1">
        <name>Mg(2+)</name>
        <dbReference type="ChEBI" id="CHEBI:18420"/>
    </cofactor>
</comment>
<comment type="activity regulation">
    <text evidence="1">Uridylyltransferase (UTase) activity is inhibited by glutamine, while glutamine activates uridylyl-removing (UR) activity.</text>
</comment>
<comment type="domain">
    <text evidence="1">Has four distinct domains: an N-terminal nucleotidyltransferase (NT) domain responsible for UTase activity, a central HD domain that encodes UR activity, and two C-terminal ACT domains that seem to have a role in glutamine sensing.</text>
</comment>
<comment type="similarity">
    <text evidence="1">Belongs to the GlnD family.</text>
</comment>
<organism>
    <name type="scientific">Burkholderia pseudomallei (strain 1710b)</name>
    <dbReference type="NCBI Taxonomy" id="320372"/>
    <lineage>
        <taxon>Bacteria</taxon>
        <taxon>Pseudomonadati</taxon>
        <taxon>Pseudomonadota</taxon>
        <taxon>Betaproteobacteria</taxon>
        <taxon>Burkholderiales</taxon>
        <taxon>Burkholderiaceae</taxon>
        <taxon>Burkholderia</taxon>
        <taxon>pseudomallei group</taxon>
    </lineage>
</organism>
<gene>
    <name evidence="1" type="primary">glnD</name>
    <name type="ordered locus">BURPS1710b_2585</name>
</gene>